<dbReference type="EMBL" id="AF015825">
    <property type="protein sequence ID" value="AAC46322.1"/>
    <property type="molecule type" value="Genomic_DNA"/>
</dbReference>
<dbReference type="EMBL" id="AL009126">
    <property type="protein sequence ID" value="CAB13083.1"/>
    <property type="molecule type" value="Genomic_DNA"/>
</dbReference>
<dbReference type="PIR" id="G69851">
    <property type="entry name" value="G69851"/>
</dbReference>
<dbReference type="RefSeq" id="NP_389108.1">
    <property type="nucleotide sequence ID" value="NC_000964.3"/>
</dbReference>
<dbReference type="RefSeq" id="WP_003232772.1">
    <property type="nucleotide sequence ID" value="NZ_OZ025638.1"/>
</dbReference>
<dbReference type="SMR" id="O34428"/>
<dbReference type="FunCoup" id="O34428">
    <property type="interactions" value="2"/>
</dbReference>
<dbReference type="STRING" id="224308.BSU12260"/>
<dbReference type="PaxDb" id="224308-BSU12260"/>
<dbReference type="EnsemblBacteria" id="CAB13083">
    <property type="protein sequence ID" value="CAB13083"/>
    <property type="gene ID" value="BSU_12260"/>
</dbReference>
<dbReference type="GeneID" id="939404"/>
<dbReference type="KEGG" id="bsu:BSU12260"/>
<dbReference type="PATRIC" id="fig|224308.179.peg.1325"/>
<dbReference type="eggNOG" id="COG0697">
    <property type="taxonomic scope" value="Bacteria"/>
</dbReference>
<dbReference type="InParanoid" id="O34428"/>
<dbReference type="OrthoDB" id="3457556at2"/>
<dbReference type="BioCyc" id="BSUB:BSU12260-MONOMER"/>
<dbReference type="Proteomes" id="UP000001570">
    <property type="component" value="Chromosome"/>
</dbReference>
<dbReference type="GO" id="GO:0005886">
    <property type="term" value="C:plasma membrane"/>
    <property type="evidence" value="ECO:0007669"/>
    <property type="project" value="UniProtKB-SubCell"/>
</dbReference>
<dbReference type="InterPro" id="IPR032713">
    <property type="entry name" value="EmrE"/>
</dbReference>
<dbReference type="Pfam" id="PF13536">
    <property type="entry name" value="EmrE"/>
    <property type="match status" value="1"/>
</dbReference>
<name>YJLA_BACSU</name>
<organism>
    <name type="scientific">Bacillus subtilis (strain 168)</name>
    <dbReference type="NCBI Taxonomy" id="224308"/>
    <lineage>
        <taxon>Bacteria</taxon>
        <taxon>Bacillati</taxon>
        <taxon>Bacillota</taxon>
        <taxon>Bacilli</taxon>
        <taxon>Bacillales</taxon>
        <taxon>Bacillaceae</taxon>
        <taxon>Bacillus</taxon>
    </lineage>
</organism>
<sequence length="324" mass="35625">MKAIVIGILASLFFAVTFILNRAMELSGGSWLWSSSLRFIFMVPFLCLIVIMRGTFTPLLLEMRKKPFYWIKWSFVGFVLFYAPITFAAAYGPGWLIAGTWQITIVAGVLLSPLFYVKQDMPGGPQLIRQKIPLVSLGTSVIILIGAALIQLQHAESLSGRMLLFSVLPVVIAAFAYPLGNRRMLEEYGGRLDTFQRVLGMTLASLPFWLILAAYGWWSDGLPTASQTVQSFIVAVSSGIIATVLFFWATDMVRDNPQKLAAVEATQSGEVIFALLGEIVLLSGVFPSLLSFAGLFIIIAGMMLHTFASQPRKPKKKAQSNLTA</sequence>
<comment type="subcellular location">
    <subcellularLocation>
        <location evidence="2">Cell membrane</location>
        <topology evidence="2">Multi-pass membrane protein</topology>
    </subcellularLocation>
</comment>
<keyword id="KW-1003">Cell membrane</keyword>
<keyword id="KW-0472">Membrane</keyword>
<keyword id="KW-1185">Reference proteome</keyword>
<keyword id="KW-0812">Transmembrane</keyword>
<keyword id="KW-1133">Transmembrane helix</keyword>
<protein>
    <recommendedName>
        <fullName>Uncharacterized protein YjlA</fullName>
    </recommendedName>
</protein>
<reference key="1">
    <citation type="submission" date="1997-07" db="EMBL/GenBank/DDBJ databases">
        <title>A 35.7 kb DNA fragment from Bacillus subtilis chromosome containing a putative 12.3 kb operon involved in hexuronate catabolism and a perfect catabolite-responsive element.</title>
        <authorList>
            <person name="Rivolta C."/>
            <person name="Soldo B."/>
            <person name="Lazarevic V."/>
            <person name="Joris B."/>
            <person name="Mauel C."/>
            <person name="Karamata D."/>
        </authorList>
    </citation>
    <scope>NUCLEOTIDE SEQUENCE [GENOMIC DNA]</scope>
    <source>
        <strain>168</strain>
    </source>
</reference>
<reference key="2">
    <citation type="journal article" date="1997" name="Nature">
        <title>The complete genome sequence of the Gram-positive bacterium Bacillus subtilis.</title>
        <authorList>
            <person name="Kunst F."/>
            <person name="Ogasawara N."/>
            <person name="Moszer I."/>
            <person name="Albertini A.M."/>
            <person name="Alloni G."/>
            <person name="Azevedo V."/>
            <person name="Bertero M.G."/>
            <person name="Bessieres P."/>
            <person name="Bolotin A."/>
            <person name="Borchert S."/>
            <person name="Borriss R."/>
            <person name="Boursier L."/>
            <person name="Brans A."/>
            <person name="Braun M."/>
            <person name="Brignell S.C."/>
            <person name="Bron S."/>
            <person name="Brouillet S."/>
            <person name="Bruschi C.V."/>
            <person name="Caldwell B."/>
            <person name="Capuano V."/>
            <person name="Carter N.M."/>
            <person name="Choi S.-K."/>
            <person name="Codani J.-J."/>
            <person name="Connerton I.F."/>
            <person name="Cummings N.J."/>
            <person name="Daniel R.A."/>
            <person name="Denizot F."/>
            <person name="Devine K.M."/>
            <person name="Duesterhoeft A."/>
            <person name="Ehrlich S.D."/>
            <person name="Emmerson P.T."/>
            <person name="Entian K.-D."/>
            <person name="Errington J."/>
            <person name="Fabret C."/>
            <person name="Ferrari E."/>
            <person name="Foulger D."/>
            <person name="Fritz C."/>
            <person name="Fujita M."/>
            <person name="Fujita Y."/>
            <person name="Fuma S."/>
            <person name="Galizzi A."/>
            <person name="Galleron N."/>
            <person name="Ghim S.-Y."/>
            <person name="Glaser P."/>
            <person name="Goffeau A."/>
            <person name="Golightly E.J."/>
            <person name="Grandi G."/>
            <person name="Guiseppi G."/>
            <person name="Guy B.J."/>
            <person name="Haga K."/>
            <person name="Haiech J."/>
            <person name="Harwood C.R."/>
            <person name="Henaut A."/>
            <person name="Hilbert H."/>
            <person name="Holsappel S."/>
            <person name="Hosono S."/>
            <person name="Hullo M.-F."/>
            <person name="Itaya M."/>
            <person name="Jones L.-M."/>
            <person name="Joris B."/>
            <person name="Karamata D."/>
            <person name="Kasahara Y."/>
            <person name="Klaerr-Blanchard M."/>
            <person name="Klein C."/>
            <person name="Kobayashi Y."/>
            <person name="Koetter P."/>
            <person name="Koningstein G."/>
            <person name="Krogh S."/>
            <person name="Kumano M."/>
            <person name="Kurita K."/>
            <person name="Lapidus A."/>
            <person name="Lardinois S."/>
            <person name="Lauber J."/>
            <person name="Lazarevic V."/>
            <person name="Lee S.-M."/>
            <person name="Levine A."/>
            <person name="Liu H."/>
            <person name="Masuda S."/>
            <person name="Mauel C."/>
            <person name="Medigue C."/>
            <person name="Medina N."/>
            <person name="Mellado R.P."/>
            <person name="Mizuno M."/>
            <person name="Moestl D."/>
            <person name="Nakai S."/>
            <person name="Noback M."/>
            <person name="Noone D."/>
            <person name="O'Reilly M."/>
            <person name="Ogawa K."/>
            <person name="Ogiwara A."/>
            <person name="Oudega B."/>
            <person name="Park S.-H."/>
            <person name="Parro V."/>
            <person name="Pohl T.M."/>
            <person name="Portetelle D."/>
            <person name="Porwollik S."/>
            <person name="Prescott A.M."/>
            <person name="Presecan E."/>
            <person name="Pujic P."/>
            <person name="Purnelle B."/>
            <person name="Rapoport G."/>
            <person name="Rey M."/>
            <person name="Reynolds S."/>
            <person name="Rieger M."/>
            <person name="Rivolta C."/>
            <person name="Rocha E."/>
            <person name="Roche B."/>
            <person name="Rose M."/>
            <person name="Sadaie Y."/>
            <person name="Sato T."/>
            <person name="Scanlan E."/>
            <person name="Schleich S."/>
            <person name="Schroeter R."/>
            <person name="Scoffone F."/>
            <person name="Sekiguchi J."/>
            <person name="Sekowska A."/>
            <person name="Seror S.J."/>
            <person name="Serror P."/>
            <person name="Shin B.-S."/>
            <person name="Soldo B."/>
            <person name="Sorokin A."/>
            <person name="Tacconi E."/>
            <person name="Takagi T."/>
            <person name="Takahashi H."/>
            <person name="Takemaru K."/>
            <person name="Takeuchi M."/>
            <person name="Tamakoshi A."/>
            <person name="Tanaka T."/>
            <person name="Terpstra P."/>
            <person name="Tognoni A."/>
            <person name="Tosato V."/>
            <person name="Uchiyama S."/>
            <person name="Vandenbol M."/>
            <person name="Vannier F."/>
            <person name="Vassarotti A."/>
            <person name="Viari A."/>
            <person name="Wambutt R."/>
            <person name="Wedler E."/>
            <person name="Wedler H."/>
            <person name="Weitzenegger T."/>
            <person name="Winters P."/>
            <person name="Wipat A."/>
            <person name="Yamamoto H."/>
            <person name="Yamane K."/>
            <person name="Yasumoto K."/>
            <person name="Yata K."/>
            <person name="Yoshida K."/>
            <person name="Yoshikawa H.-F."/>
            <person name="Zumstein E."/>
            <person name="Yoshikawa H."/>
            <person name="Danchin A."/>
        </authorList>
    </citation>
    <scope>NUCLEOTIDE SEQUENCE [LARGE SCALE GENOMIC DNA]</scope>
    <source>
        <strain>168</strain>
    </source>
</reference>
<evidence type="ECO:0000255" key="1"/>
<evidence type="ECO:0000305" key="2"/>
<feature type="chain" id="PRO_0000049598" description="Uncharacterized protein YjlA">
    <location>
        <begin position="1"/>
        <end position="324"/>
    </location>
</feature>
<feature type="transmembrane region" description="Helical" evidence="1">
    <location>
        <begin position="5"/>
        <end position="24"/>
    </location>
</feature>
<feature type="transmembrane region" description="Helical" evidence="1">
    <location>
        <begin position="39"/>
        <end position="61"/>
    </location>
</feature>
<feature type="transmembrane region" description="Helical" evidence="1">
    <location>
        <begin position="68"/>
        <end position="90"/>
    </location>
</feature>
<feature type="transmembrane region" description="Helical" evidence="1">
    <location>
        <begin position="95"/>
        <end position="117"/>
    </location>
</feature>
<feature type="transmembrane region" description="Helical" evidence="1">
    <location>
        <begin position="130"/>
        <end position="152"/>
    </location>
</feature>
<feature type="transmembrane region" description="Helical" evidence="1">
    <location>
        <begin position="162"/>
        <end position="179"/>
    </location>
</feature>
<feature type="transmembrane region" description="Helical" evidence="1">
    <location>
        <begin position="199"/>
        <end position="218"/>
    </location>
</feature>
<feature type="transmembrane region" description="Helical" evidence="1">
    <location>
        <begin position="228"/>
        <end position="250"/>
    </location>
</feature>
<gene>
    <name type="primary">yjlA</name>
    <name type="ordered locus">BSU12260</name>
</gene>
<accession>O34428</accession>
<proteinExistence type="predicted"/>